<dbReference type="EC" id="5.5.1.1" evidence="1"/>
<dbReference type="EMBL" id="M19460">
    <property type="protein sequence ID" value="AAA25766.1"/>
    <property type="molecule type" value="Genomic_DNA"/>
</dbReference>
<dbReference type="EMBL" id="M16236">
    <property type="protein sequence ID" value="AAA25765.1"/>
    <property type="molecule type" value="Genomic_DNA"/>
</dbReference>
<dbReference type="PIR" id="A28630">
    <property type="entry name" value="A28630"/>
</dbReference>
<dbReference type="PDB" id="1MUC">
    <property type="method" value="X-ray"/>
    <property type="resolution" value="1.85 A"/>
    <property type="chains" value="A/B=1-375"/>
</dbReference>
<dbReference type="PDB" id="2MUC">
    <property type="method" value="X-ray"/>
    <property type="resolution" value="2.30 A"/>
    <property type="chains" value="A/B=1-375"/>
</dbReference>
<dbReference type="PDB" id="3MUC">
    <property type="method" value="X-ray"/>
    <property type="resolution" value="2.30 A"/>
    <property type="chains" value="A/B=5-374"/>
</dbReference>
<dbReference type="PDBsum" id="1MUC"/>
<dbReference type="PDBsum" id="2MUC"/>
<dbReference type="PDBsum" id="3MUC"/>
<dbReference type="SMR" id="P08310"/>
<dbReference type="eggNOG" id="COG4948">
    <property type="taxonomic scope" value="Bacteria"/>
</dbReference>
<dbReference type="BioCyc" id="MetaCyc:MONOMER-3423"/>
<dbReference type="BRENDA" id="5.5.1.1">
    <property type="organism ID" value="5092"/>
</dbReference>
<dbReference type="SABIO-RK" id="P08310"/>
<dbReference type="UniPathway" id="UPA00157">
    <property type="reaction ID" value="UER00259"/>
</dbReference>
<dbReference type="EvolutionaryTrace" id="P08310"/>
<dbReference type="GO" id="GO:0018850">
    <property type="term" value="F:chloromuconate cycloisomerase activity"/>
    <property type="evidence" value="ECO:0007669"/>
    <property type="project" value="InterPro"/>
</dbReference>
<dbReference type="GO" id="GO:0030145">
    <property type="term" value="F:manganese ion binding"/>
    <property type="evidence" value="ECO:0007669"/>
    <property type="project" value="InterPro"/>
</dbReference>
<dbReference type="GO" id="GO:0018849">
    <property type="term" value="F:muconate cycloisomerase activity"/>
    <property type="evidence" value="ECO:0007669"/>
    <property type="project" value="UniProtKB-EC"/>
</dbReference>
<dbReference type="GO" id="GO:0009063">
    <property type="term" value="P:amino acid catabolic process"/>
    <property type="evidence" value="ECO:0007669"/>
    <property type="project" value="InterPro"/>
</dbReference>
<dbReference type="GO" id="GO:0042952">
    <property type="term" value="P:beta-ketoadipate pathway"/>
    <property type="evidence" value="ECO:0007669"/>
    <property type="project" value="UniProtKB-UniPathway"/>
</dbReference>
<dbReference type="CDD" id="cd03318">
    <property type="entry name" value="MLE"/>
    <property type="match status" value="1"/>
</dbReference>
<dbReference type="Gene3D" id="3.20.20.120">
    <property type="entry name" value="Enolase-like C-terminal domain"/>
    <property type="match status" value="1"/>
</dbReference>
<dbReference type="Gene3D" id="3.30.390.10">
    <property type="entry name" value="Enolase-like, N-terminal domain"/>
    <property type="match status" value="1"/>
</dbReference>
<dbReference type="InterPro" id="IPR013370">
    <property type="entry name" value="Chloromuconate_cycloisomerase"/>
</dbReference>
<dbReference type="InterPro" id="IPR036849">
    <property type="entry name" value="Enolase-like_C_sf"/>
</dbReference>
<dbReference type="InterPro" id="IPR029017">
    <property type="entry name" value="Enolase-like_N"/>
</dbReference>
<dbReference type="InterPro" id="IPR029065">
    <property type="entry name" value="Enolase_C-like"/>
</dbReference>
<dbReference type="InterPro" id="IPR018110">
    <property type="entry name" value="Mandel_Rmase/mucon_lact_enz_CS"/>
</dbReference>
<dbReference type="InterPro" id="IPR013342">
    <property type="entry name" value="Mandelate_racemase_C"/>
</dbReference>
<dbReference type="InterPro" id="IPR013341">
    <property type="entry name" value="Mandelate_racemase_N_dom"/>
</dbReference>
<dbReference type="NCBIfam" id="TIGR02534">
    <property type="entry name" value="mucon_cyclo"/>
    <property type="match status" value="1"/>
</dbReference>
<dbReference type="PANTHER" id="PTHR48073:SF2">
    <property type="entry name" value="O-SUCCINYLBENZOATE SYNTHASE"/>
    <property type="match status" value="1"/>
</dbReference>
<dbReference type="PANTHER" id="PTHR48073">
    <property type="entry name" value="O-SUCCINYLBENZOATE SYNTHASE-RELATED"/>
    <property type="match status" value="1"/>
</dbReference>
<dbReference type="Pfam" id="PF13378">
    <property type="entry name" value="MR_MLE_C"/>
    <property type="match status" value="1"/>
</dbReference>
<dbReference type="Pfam" id="PF02746">
    <property type="entry name" value="MR_MLE_N"/>
    <property type="match status" value="1"/>
</dbReference>
<dbReference type="SFLD" id="SFLDG01258">
    <property type="entry name" value="(chloro)muconate_cycloisomeras"/>
    <property type="match status" value="1"/>
</dbReference>
<dbReference type="SFLD" id="SFLDG00180">
    <property type="entry name" value="muconate_cycloisomerase"/>
    <property type="match status" value="1"/>
</dbReference>
<dbReference type="SMART" id="SM00922">
    <property type="entry name" value="MR_MLE"/>
    <property type="match status" value="1"/>
</dbReference>
<dbReference type="SUPFAM" id="SSF51604">
    <property type="entry name" value="Enolase C-terminal domain-like"/>
    <property type="match status" value="1"/>
</dbReference>
<dbReference type="SUPFAM" id="SSF54826">
    <property type="entry name" value="Enolase N-terminal domain-like"/>
    <property type="match status" value="1"/>
</dbReference>
<dbReference type="PROSITE" id="PS00908">
    <property type="entry name" value="MR_MLE_1"/>
    <property type="match status" value="1"/>
</dbReference>
<dbReference type="PROSITE" id="PS00909">
    <property type="entry name" value="MR_MLE_2"/>
    <property type="match status" value="1"/>
</dbReference>
<accession>P08310</accession>
<organism>
    <name type="scientific">Pseudomonas putida</name>
    <name type="common">Arthrobacter siderocapsulatus</name>
    <dbReference type="NCBI Taxonomy" id="303"/>
    <lineage>
        <taxon>Bacteria</taxon>
        <taxon>Pseudomonadati</taxon>
        <taxon>Pseudomonadota</taxon>
        <taxon>Gammaproteobacteria</taxon>
        <taxon>Pseudomonadales</taxon>
        <taxon>Pseudomonadaceae</taxon>
        <taxon>Pseudomonas</taxon>
    </lineage>
</organism>
<proteinExistence type="evidence at protein level"/>
<comment type="function">
    <text>Catalyzes a syn cycloisomerization.</text>
</comment>
<comment type="catalytic activity">
    <reaction evidence="1">
        <text>(S)-muconolactone = cis,cis-muconate + H(+)</text>
        <dbReference type="Rhea" id="RHEA:30031"/>
        <dbReference type="ChEBI" id="CHEBI:15378"/>
        <dbReference type="ChEBI" id="CHEBI:32379"/>
        <dbReference type="ChEBI" id="CHEBI:58736"/>
        <dbReference type="EC" id="5.5.1.1"/>
    </reaction>
</comment>
<comment type="cofactor">
    <cofactor>
        <name>Mn(2+)</name>
        <dbReference type="ChEBI" id="CHEBI:29035"/>
    </cofactor>
</comment>
<comment type="pathway">
    <text>Aromatic compound metabolism; beta-ketoadipate pathway; 5-oxo-4,5-dihydro-2-furylacetate from catechol: step 2/3.</text>
</comment>
<comment type="subunit">
    <text>Homooctamer.</text>
</comment>
<comment type="similarity">
    <text evidence="2">Belongs to the mandelate racemase/muconate lactonizing enzyme family.</text>
</comment>
<name>CATB_PSEPU</name>
<reference key="1">
    <citation type="journal article" date="1987" name="Gene">
        <title>Cloning and complete nucleotide sequence determination of the catB gene encoding cis,cis-muconate lactonizing enzyme.</title>
        <authorList>
            <person name="Aldrich T.L."/>
            <person name="Frantz B."/>
            <person name="Gill J.F."/>
            <person name="Kilbane J.J."/>
            <person name="Chakrabarty A.M."/>
        </authorList>
    </citation>
    <scope>NUCLEOTIDE SEQUENCE [GENOMIC DNA]</scope>
    <source>
        <strain>PRS2015</strain>
    </source>
</reference>
<reference key="2">
    <citation type="journal article" date="1988" name="J. Bacteriol.">
        <title>Transcriptional regulation, nucleotide sequence, and localization of the promoter of the catBC operon in Pseudomonas putida.</title>
        <authorList>
            <person name="Aldrich T.L."/>
            <person name="Chakrabarty A.M."/>
        </authorList>
    </citation>
    <scope>NUCLEOTIDE SEQUENCE [GENOMIC DNA]</scope>
</reference>
<reference key="3">
    <citation type="journal article" date="1966" name="J. Biol. Chem.">
        <title>The conversion of catechol and protocatechuate to beta-ketoadipate by Pseudomonas putida. 3. Enzymes of the catechol pathway.</title>
        <authorList>
            <person name="Ornston L.N."/>
        </authorList>
    </citation>
    <scope>CATALYTIC ACTIVITY</scope>
</reference>
<reference key="4">
    <citation type="journal article" date="1990" name="Nature">
        <title>Mandelate racemase and muconate lactonizing enzyme are mechanistically distinct and structurally homologous.</title>
        <authorList>
            <person name="Neidhart D.J."/>
            <person name="Kenyon G.L."/>
            <person name="Gerlt J.A."/>
            <person name="Petsko G.A."/>
        </authorList>
    </citation>
    <scope>SIMILARITY TO MR</scope>
</reference>
<reference key="5">
    <citation type="journal article" date="1987" name="J. Mol. Biol.">
        <title>Crystal structure of muconate lactonizing enzyme at 3-A resolution.</title>
        <authorList>
            <person name="Goldman A."/>
            <person name="Ollis D.L."/>
            <person name="Steitz T.A."/>
        </authorList>
    </citation>
    <scope>X-RAY CRYSTALLOGRAPHY (3.0 ANGSTROMS)</scope>
</reference>
<reference key="6">
    <citation type="journal article" date="1995" name="J. Mol. Biol.">
        <title>The refined X-ray structure of muconate lactonizing enzyme from Pseudomonas putida PRS2000 at 1.85-A resolution.</title>
        <authorList>
            <person name="Helin S."/>
            <person name="Kahn P.C."/>
            <person name="Guha B.L."/>
            <person name="Mallows D.J."/>
            <person name="Goldman A."/>
        </authorList>
    </citation>
    <scope>X-RAY CRYSTALLOGRAPHY (1.85 ANGSTROMS)</scope>
    <source>
        <strain>PRS2000</strain>
    </source>
</reference>
<gene>
    <name type="primary">catB</name>
</gene>
<feature type="initiator methionine" description="Removed">
    <location>
        <position position="1"/>
    </location>
</feature>
<feature type="chain" id="PRO_0000171251" description="Muconate cycloisomerase 1">
    <location>
        <begin position="2"/>
        <end position="375"/>
    </location>
</feature>
<feature type="active site" description="Proton acceptor">
    <location>
        <position position="171"/>
    </location>
</feature>
<feature type="active site" description="Proton donor">
    <location>
        <position position="329"/>
    </location>
</feature>
<feature type="binding site">
    <location>
        <position position="200"/>
    </location>
    <ligand>
        <name>Mn(2+)</name>
        <dbReference type="ChEBI" id="CHEBI:29035"/>
    </ligand>
</feature>
<feature type="binding site">
    <location>
        <position position="226"/>
    </location>
    <ligand>
        <name>Mn(2+)</name>
        <dbReference type="ChEBI" id="CHEBI:29035"/>
    </ligand>
</feature>
<feature type="binding site">
    <location>
        <position position="251"/>
    </location>
    <ligand>
        <name>Mn(2+)</name>
        <dbReference type="ChEBI" id="CHEBI:29035"/>
    </ligand>
</feature>
<feature type="sequence conflict" description="In Ref. 2; AAA25766." evidence="2" ref="2">
    <original>T</original>
    <variation>S</variation>
    <location>
        <position position="33"/>
    </location>
</feature>
<feature type="sequence conflict" description="In Ref. 2; AAA25766." evidence="2" ref="2">
    <original>S</original>
    <variation>T</variation>
    <location>
        <position position="65"/>
    </location>
</feature>
<feature type="sequence conflict" description="In Ref. 1; AAA25765." evidence="2" ref="1">
    <location>
        <position position="244"/>
    </location>
</feature>
<feature type="strand" evidence="3">
    <location>
        <begin position="5"/>
        <end position="14"/>
    </location>
</feature>
<feature type="strand" evidence="3">
    <location>
        <begin position="16"/>
        <end position="19"/>
    </location>
</feature>
<feature type="strand" evidence="3">
    <location>
        <begin position="33"/>
        <end position="43"/>
    </location>
</feature>
<feature type="strand" evidence="3">
    <location>
        <begin position="48"/>
        <end position="54"/>
    </location>
</feature>
<feature type="turn" evidence="3">
    <location>
        <begin position="57"/>
        <end position="61"/>
    </location>
</feature>
<feature type="helix" evidence="3">
    <location>
        <begin position="66"/>
        <end position="75"/>
    </location>
</feature>
<feature type="helix" evidence="3">
    <location>
        <begin position="77"/>
        <end position="81"/>
    </location>
</feature>
<feature type="helix" evidence="3">
    <location>
        <begin position="89"/>
        <end position="99"/>
    </location>
</feature>
<feature type="helix" evidence="3">
    <location>
        <begin position="104"/>
        <end position="122"/>
    </location>
</feature>
<feature type="helix" evidence="3">
    <location>
        <begin position="126"/>
        <end position="129"/>
    </location>
</feature>
<feature type="strand" evidence="3">
    <location>
        <begin position="136"/>
        <end position="140"/>
    </location>
</feature>
<feature type="strand" evidence="3">
    <location>
        <begin position="142"/>
        <end position="144"/>
    </location>
</feature>
<feature type="helix" evidence="3">
    <location>
        <begin position="149"/>
        <end position="161"/>
    </location>
</feature>
<feature type="strand" evidence="3">
    <location>
        <begin position="166"/>
        <end position="171"/>
    </location>
</feature>
<feature type="strand" evidence="3">
    <location>
        <begin position="173"/>
        <end position="175"/>
    </location>
</feature>
<feature type="helix" evidence="3">
    <location>
        <begin position="177"/>
        <end position="191"/>
    </location>
</feature>
<feature type="helix" evidence="3">
    <location>
        <begin position="192"/>
        <end position="194"/>
    </location>
</feature>
<feature type="strand" evidence="3">
    <location>
        <begin position="195"/>
        <end position="200"/>
    </location>
</feature>
<feature type="helix" evidence="3">
    <location>
        <begin position="207"/>
        <end position="219"/>
    </location>
</feature>
<feature type="helix" evidence="3">
    <location>
        <begin position="234"/>
        <end position="243"/>
    </location>
</feature>
<feature type="strand" evidence="3">
    <location>
        <begin position="248"/>
        <end position="251"/>
    </location>
</feature>
<feature type="helix" evidence="3">
    <location>
        <begin position="257"/>
        <end position="266"/>
    </location>
</feature>
<feature type="strand" evidence="3">
    <location>
        <begin position="270"/>
        <end position="274"/>
    </location>
</feature>
<feature type="helix" evidence="3">
    <location>
        <begin position="276"/>
        <end position="279"/>
    </location>
</feature>
<feature type="helix" evidence="3">
    <location>
        <begin position="282"/>
        <end position="295"/>
    </location>
</feature>
<feature type="strand" evidence="3">
    <location>
        <begin position="298"/>
        <end position="301"/>
    </location>
</feature>
<feature type="helix" evidence="3">
    <location>
        <begin position="308"/>
        <end position="318"/>
    </location>
</feature>
<feature type="helix" evidence="3">
    <location>
        <begin position="332"/>
        <end position="335"/>
    </location>
</feature>
<feature type="strand" evidence="3">
    <location>
        <begin position="336"/>
        <end position="338"/>
    </location>
</feature>
<feature type="strand" evidence="3">
    <location>
        <begin position="340"/>
        <end position="343"/>
    </location>
</feature>
<feature type="strand" evidence="3">
    <location>
        <begin position="346"/>
        <end position="348"/>
    </location>
</feature>
<feature type="strand" evidence="3">
    <location>
        <begin position="351"/>
        <end position="353"/>
    </location>
</feature>
<feature type="helix" evidence="3">
    <location>
        <begin position="366"/>
        <end position="372"/>
    </location>
</feature>
<keyword id="KW-0002">3D-structure</keyword>
<keyword id="KW-0058">Aromatic hydrocarbons catabolism</keyword>
<keyword id="KW-0413">Isomerase</keyword>
<keyword id="KW-0464">Manganese</keyword>
<keyword id="KW-0479">Metal-binding</keyword>
<protein>
    <recommendedName>
        <fullName>Muconate cycloisomerase 1</fullName>
        <ecNumber evidence="1">5.5.1.1</ecNumber>
    </recommendedName>
    <alternativeName>
        <fullName>Cis,cis-muconate lactonizing enzyme I</fullName>
        <shortName>MLE</shortName>
    </alternativeName>
    <alternativeName>
        <fullName>Muconate cycloisomerase I</fullName>
    </alternativeName>
</protein>
<evidence type="ECO:0000269" key="1">
    <source>
    </source>
</evidence>
<evidence type="ECO:0000305" key="2"/>
<evidence type="ECO:0007829" key="3">
    <source>
        <dbReference type="PDB" id="1MUC"/>
    </source>
</evidence>
<sequence>MTSVLIERIEAIIVHDLPTIRPPHKLAMHTMQTQTLVLIRVRCSDGVEGIGEATTIGGLAYGYESPEGIKANIDAHLAPALVGLPADNINAAMLKLDKLAKGNTFAKSGIESALLDAQGKRLGLPVSELLGGRVRDSLEVAWTLASGDTARDIAEAQHMLEIRRHRVFKLKIGANPLAQDLKHVVAIKRELGDSASVRVDVNQYWDESQAIRACQVLGDNGIDLIEQPISRINRSGQVRLNQRSPAPIMADESIESVEDAFSLAADGAASIFALKIAKNGGPRAVLRTAQIAEAAGIALYGGTMLEGSIGTLASAHAFLTLRQLTWGTELFGPLLLTEEIVNEPPQYRDFQLHIPRTPGLGLTLDEQRLARFARR</sequence>